<feature type="chain" id="PRO_0000268856" description="Homeobox protein Mohawk">
    <location>
        <begin position="1"/>
        <end position="352"/>
    </location>
</feature>
<feature type="DNA-binding region" description="Homeobox; TALE-type" evidence="2">
    <location>
        <begin position="71"/>
        <end position="132"/>
    </location>
</feature>
<feature type="region of interest" description="Disordered" evidence="3">
    <location>
        <begin position="19"/>
        <end position="54"/>
    </location>
</feature>
<feature type="region of interest" description="Disordered" evidence="3">
    <location>
        <begin position="159"/>
        <end position="189"/>
    </location>
</feature>
<feature type="region of interest" description="Disordered" evidence="3">
    <location>
        <begin position="245"/>
        <end position="301"/>
    </location>
</feature>
<feature type="sequence variant" id="VAR_033875" description="In dbSNP:rs34439626.">
    <original>R</original>
    <variation>H</variation>
    <location>
        <position position="40"/>
    </location>
</feature>
<feature type="sequence conflict" description="In Ref. 4; AAH36207." evidence="4" ref="4">
    <original>G</original>
    <variation>S</variation>
    <location>
        <position position="11"/>
    </location>
</feature>
<sequence length="352" mass="39331">MNTIVFNKLSGAVLFEDGGASERERGGRPYSGVLDSPHARPEVGIPDGPPLKDNLGLRHRRTGARQNGGKVRHKRQALQDMARPLKQWLYKHRDNPYPTKTEKILLALGSQMTLVQVSNWFANARRRLKNTVRQPDLSWALRIKLYNKYVQGNAERLSVSSDDSCSEDGENPPRTHMNEGGYNTPVHHPVIKSENSVIKAGVRPESRASEDYVAPPKYKSSLLNRYLNDSLRHVMATNTTMMGKTRQRNHSGSFSSNEFEEELVSPSSSETEGNFVYRTDTLENGSNKGESAANRKGPSKDDTYWKEINAAMALTNLAQGKDKLQGTTSCIIQKSSHIAEVKTVKVPLVQQF</sequence>
<gene>
    <name type="primary">MKX</name>
    <name type="synonym">C10orf48</name>
    <name type="synonym">IRXL1</name>
</gene>
<reference key="1">
    <citation type="journal article" date="2004" name="Nat. Genet.">
        <title>Complete sequencing and characterization of 21,243 full-length human cDNAs.</title>
        <authorList>
            <person name="Ota T."/>
            <person name="Suzuki Y."/>
            <person name="Nishikawa T."/>
            <person name="Otsuki T."/>
            <person name="Sugiyama T."/>
            <person name="Irie R."/>
            <person name="Wakamatsu A."/>
            <person name="Hayashi K."/>
            <person name="Sato H."/>
            <person name="Nagai K."/>
            <person name="Kimura K."/>
            <person name="Makita H."/>
            <person name="Sekine M."/>
            <person name="Obayashi M."/>
            <person name="Nishi T."/>
            <person name="Shibahara T."/>
            <person name="Tanaka T."/>
            <person name="Ishii S."/>
            <person name="Yamamoto J."/>
            <person name="Saito K."/>
            <person name="Kawai Y."/>
            <person name="Isono Y."/>
            <person name="Nakamura Y."/>
            <person name="Nagahari K."/>
            <person name="Murakami K."/>
            <person name="Yasuda T."/>
            <person name="Iwayanagi T."/>
            <person name="Wagatsuma M."/>
            <person name="Shiratori A."/>
            <person name="Sudo H."/>
            <person name="Hosoiri T."/>
            <person name="Kaku Y."/>
            <person name="Kodaira H."/>
            <person name="Kondo H."/>
            <person name="Sugawara M."/>
            <person name="Takahashi M."/>
            <person name="Kanda K."/>
            <person name="Yokoi T."/>
            <person name="Furuya T."/>
            <person name="Kikkawa E."/>
            <person name="Omura Y."/>
            <person name="Abe K."/>
            <person name="Kamihara K."/>
            <person name="Katsuta N."/>
            <person name="Sato K."/>
            <person name="Tanikawa M."/>
            <person name="Yamazaki M."/>
            <person name="Ninomiya K."/>
            <person name="Ishibashi T."/>
            <person name="Yamashita H."/>
            <person name="Murakawa K."/>
            <person name="Fujimori K."/>
            <person name="Tanai H."/>
            <person name="Kimata M."/>
            <person name="Watanabe M."/>
            <person name="Hiraoka S."/>
            <person name="Chiba Y."/>
            <person name="Ishida S."/>
            <person name="Ono Y."/>
            <person name="Takiguchi S."/>
            <person name="Watanabe S."/>
            <person name="Yosida M."/>
            <person name="Hotuta T."/>
            <person name="Kusano J."/>
            <person name="Kanehori K."/>
            <person name="Takahashi-Fujii A."/>
            <person name="Hara H."/>
            <person name="Tanase T.-O."/>
            <person name="Nomura Y."/>
            <person name="Togiya S."/>
            <person name="Komai F."/>
            <person name="Hara R."/>
            <person name="Takeuchi K."/>
            <person name="Arita M."/>
            <person name="Imose N."/>
            <person name="Musashino K."/>
            <person name="Yuuki H."/>
            <person name="Oshima A."/>
            <person name="Sasaki N."/>
            <person name="Aotsuka S."/>
            <person name="Yoshikawa Y."/>
            <person name="Matsunawa H."/>
            <person name="Ichihara T."/>
            <person name="Shiohata N."/>
            <person name="Sano S."/>
            <person name="Moriya S."/>
            <person name="Momiyama H."/>
            <person name="Satoh N."/>
            <person name="Takami S."/>
            <person name="Terashima Y."/>
            <person name="Suzuki O."/>
            <person name="Nakagawa S."/>
            <person name="Senoh A."/>
            <person name="Mizoguchi H."/>
            <person name="Goto Y."/>
            <person name="Shimizu F."/>
            <person name="Wakebe H."/>
            <person name="Hishigaki H."/>
            <person name="Watanabe T."/>
            <person name="Sugiyama A."/>
            <person name="Takemoto M."/>
            <person name="Kawakami B."/>
            <person name="Yamazaki M."/>
            <person name="Watanabe K."/>
            <person name="Kumagai A."/>
            <person name="Itakura S."/>
            <person name="Fukuzumi Y."/>
            <person name="Fujimori Y."/>
            <person name="Komiyama M."/>
            <person name="Tashiro H."/>
            <person name="Tanigami A."/>
            <person name="Fujiwara T."/>
            <person name="Ono T."/>
            <person name="Yamada K."/>
            <person name="Fujii Y."/>
            <person name="Ozaki K."/>
            <person name="Hirao M."/>
            <person name="Ohmori Y."/>
            <person name="Kawabata A."/>
            <person name="Hikiji T."/>
            <person name="Kobatake N."/>
            <person name="Inagaki H."/>
            <person name="Ikema Y."/>
            <person name="Okamoto S."/>
            <person name="Okitani R."/>
            <person name="Kawakami T."/>
            <person name="Noguchi S."/>
            <person name="Itoh T."/>
            <person name="Shigeta K."/>
            <person name="Senba T."/>
            <person name="Matsumura K."/>
            <person name="Nakajima Y."/>
            <person name="Mizuno T."/>
            <person name="Morinaga M."/>
            <person name="Sasaki M."/>
            <person name="Togashi T."/>
            <person name="Oyama M."/>
            <person name="Hata H."/>
            <person name="Watanabe M."/>
            <person name="Komatsu T."/>
            <person name="Mizushima-Sugano J."/>
            <person name="Satoh T."/>
            <person name="Shirai Y."/>
            <person name="Takahashi Y."/>
            <person name="Nakagawa K."/>
            <person name="Okumura K."/>
            <person name="Nagase T."/>
            <person name="Nomura N."/>
            <person name="Kikuchi H."/>
            <person name="Masuho Y."/>
            <person name="Yamashita R."/>
            <person name="Nakai K."/>
            <person name="Yada T."/>
            <person name="Nakamura Y."/>
            <person name="Ohara O."/>
            <person name="Isogai T."/>
            <person name="Sugano S."/>
        </authorList>
    </citation>
    <scope>NUCLEOTIDE SEQUENCE [LARGE SCALE MRNA]</scope>
</reference>
<reference key="2">
    <citation type="journal article" date="2004" name="Nature">
        <title>The DNA sequence and comparative analysis of human chromosome 10.</title>
        <authorList>
            <person name="Deloukas P."/>
            <person name="Earthrowl M.E."/>
            <person name="Grafham D.V."/>
            <person name="Rubenfield M."/>
            <person name="French L."/>
            <person name="Steward C.A."/>
            <person name="Sims S.K."/>
            <person name="Jones M.C."/>
            <person name="Searle S."/>
            <person name="Scott C."/>
            <person name="Howe K."/>
            <person name="Hunt S.E."/>
            <person name="Andrews T.D."/>
            <person name="Gilbert J.G.R."/>
            <person name="Swarbreck D."/>
            <person name="Ashurst J.L."/>
            <person name="Taylor A."/>
            <person name="Battles J."/>
            <person name="Bird C.P."/>
            <person name="Ainscough R."/>
            <person name="Almeida J.P."/>
            <person name="Ashwell R.I.S."/>
            <person name="Ambrose K.D."/>
            <person name="Babbage A.K."/>
            <person name="Bagguley C.L."/>
            <person name="Bailey J."/>
            <person name="Banerjee R."/>
            <person name="Bates K."/>
            <person name="Beasley H."/>
            <person name="Bray-Allen S."/>
            <person name="Brown A.J."/>
            <person name="Brown J.Y."/>
            <person name="Burford D.C."/>
            <person name="Burrill W."/>
            <person name="Burton J."/>
            <person name="Cahill P."/>
            <person name="Camire D."/>
            <person name="Carter N.P."/>
            <person name="Chapman J.C."/>
            <person name="Clark S.Y."/>
            <person name="Clarke G."/>
            <person name="Clee C.M."/>
            <person name="Clegg S."/>
            <person name="Corby N."/>
            <person name="Coulson A."/>
            <person name="Dhami P."/>
            <person name="Dutta I."/>
            <person name="Dunn M."/>
            <person name="Faulkner L."/>
            <person name="Frankish A."/>
            <person name="Frankland J.A."/>
            <person name="Garner P."/>
            <person name="Garnett J."/>
            <person name="Gribble S."/>
            <person name="Griffiths C."/>
            <person name="Grocock R."/>
            <person name="Gustafson E."/>
            <person name="Hammond S."/>
            <person name="Harley J.L."/>
            <person name="Hart E."/>
            <person name="Heath P.D."/>
            <person name="Ho T.P."/>
            <person name="Hopkins B."/>
            <person name="Horne J."/>
            <person name="Howden P.J."/>
            <person name="Huckle E."/>
            <person name="Hynds C."/>
            <person name="Johnson C."/>
            <person name="Johnson D."/>
            <person name="Kana A."/>
            <person name="Kay M."/>
            <person name="Kimberley A.M."/>
            <person name="Kershaw J.K."/>
            <person name="Kokkinaki M."/>
            <person name="Laird G.K."/>
            <person name="Lawlor S."/>
            <person name="Lee H.M."/>
            <person name="Leongamornlert D.A."/>
            <person name="Laird G."/>
            <person name="Lloyd C."/>
            <person name="Lloyd D.M."/>
            <person name="Loveland J."/>
            <person name="Lovell J."/>
            <person name="McLaren S."/>
            <person name="McLay K.E."/>
            <person name="McMurray A."/>
            <person name="Mashreghi-Mohammadi M."/>
            <person name="Matthews L."/>
            <person name="Milne S."/>
            <person name="Nickerson T."/>
            <person name="Nguyen M."/>
            <person name="Overton-Larty E."/>
            <person name="Palmer S.A."/>
            <person name="Pearce A.V."/>
            <person name="Peck A.I."/>
            <person name="Pelan S."/>
            <person name="Phillimore B."/>
            <person name="Porter K."/>
            <person name="Rice C.M."/>
            <person name="Rogosin A."/>
            <person name="Ross M.T."/>
            <person name="Sarafidou T."/>
            <person name="Sehra H.K."/>
            <person name="Shownkeen R."/>
            <person name="Skuce C.D."/>
            <person name="Smith M."/>
            <person name="Standring L."/>
            <person name="Sycamore N."/>
            <person name="Tester J."/>
            <person name="Thorpe A."/>
            <person name="Torcasso W."/>
            <person name="Tracey A."/>
            <person name="Tromans A."/>
            <person name="Tsolas J."/>
            <person name="Wall M."/>
            <person name="Walsh J."/>
            <person name="Wang H."/>
            <person name="Weinstock K."/>
            <person name="West A.P."/>
            <person name="Willey D.L."/>
            <person name="Whitehead S.L."/>
            <person name="Wilming L."/>
            <person name="Wray P.W."/>
            <person name="Young L."/>
            <person name="Chen Y."/>
            <person name="Lovering R.C."/>
            <person name="Moschonas N.K."/>
            <person name="Siebert R."/>
            <person name="Fechtel K."/>
            <person name="Bentley D."/>
            <person name="Durbin R.M."/>
            <person name="Hubbard T."/>
            <person name="Doucette-Stamm L."/>
            <person name="Beck S."/>
            <person name="Smith D.R."/>
            <person name="Rogers J."/>
        </authorList>
    </citation>
    <scope>NUCLEOTIDE SEQUENCE [LARGE SCALE GENOMIC DNA]</scope>
</reference>
<reference key="3">
    <citation type="submission" date="2005-09" db="EMBL/GenBank/DDBJ databases">
        <authorList>
            <person name="Mural R.J."/>
            <person name="Istrail S."/>
            <person name="Sutton G.G."/>
            <person name="Florea L."/>
            <person name="Halpern A.L."/>
            <person name="Mobarry C.M."/>
            <person name="Lippert R."/>
            <person name="Walenz B."/>
            <person name="Shatkay H."/>
            <person name="Dew I."/>
            <person name="Miller J.R."/>
            <person name="Flanigan M.J."/>
            <person name="Edwards N.J."/>
            <person name="Bolanos R."/>
            <person name="Fasulo D."/>
            <person name="Halldorsson B.V."/>
            <person name="Hannenhalli S."/>
            <person name="Turner R."/>
            <person name="Yooseph S."/>
            <person name="Lu F."/>
            <person name="Nusskern D.R."/>
            <person name="Shue B.C."/>
            <person name="Zheng X.H."/>
            <person name="Zhong F."/>
            <person name="Delcher A.L."/>
            <person name="Huson D.H."/>
            <person name="Kravitz S.A."/>
            <person name="Mouchard L."/>
            <person name="Reinert K."/>
            <person name="Remington K.A."/>
            <person name="Clark A.G."/>
            <person name="Waterman M.S."/>
            <person name="Eichler E.E."/>
            <person name="Adams M.D."/>
            <person name="Hunkapiller M.W."/>
            <person name="Myers E.W."/>
            <person name="Venter J.C."/>
        </authorList>
    </citation>
    <scope>NUCLEOTIDE SEQUENCE [LARGE SCALE GENOMIC DNA]</scope>
</reference>
<reference key="4">
    <citation type="journal article" date="2004" name="Genome Res.">
        <title>The status, quality, and expansion of the NIH full-length cDNA project: the Mammalian Gene Collection (MGC).</title>
        <authorList>
            <consortium name="The MGC Project Team"/>
        </authorList>
    </citation>
    <scope>NUCLEOTIDE SEQUENCE [LARGE SCALE MRNA]</scope>
    <source>
        <tissue>Brain</tissue>
    </source>
</reference>
<dbReference type="EMBL" id="AK125339">
    <property type="protein sequence ID" value="BAG54187.1"/>
    <property type="molecule type" value="mRNA"/>
</dbReference>
<dbReference type="EMBL" id="AC024606">
    <property type="status" value="NOT_ANNOTATED_CDS"/>
    <property type="molecule type" value="Genomic_DNA"/>
</dbReference>
<dbReference type="EMBL" id="CH471072">
    <property type="protein sequence ID" value="EAW86052.1"/>
    <property type="molecule type" value="Genomic_DNA"/>
</dbReference>
<dbReference type="EMBL" id="CH471072">
    <property type="protein sequence ID" value="EAW86053.1"/>
    <property type="molecule type" value="Genomic_DNA"/>
</dbReference>
<dbReference type="EMBL" id="BC036207">
    <property type="protein sequence ID" value="AAH36207.1"/>
    <property type="molecule type" value="mRNA"/>
</dbReference>
<dbReference type="CCDS" id="CCDS7156.1"/>
<dbReference type="RefSeq" id="NP_001229631.1">
    <property type="nucleotide sequence ID" value="NM_001242702.2"/>
</dbReference>
<dbReference type="RefSeq" id="NP_775847.2">
    <property type="nucleotide sequence ID" value="NM_173576.3"/>
</dbReference>
<dbReference type="RefSeq" id="XP_016871594.1">
    <property type="nucleotide sequence ID" value="XM_017016105.2"/>
</dbReference>
<dbReference type="RefSeq" id="XP_016871595.1">
    <property type="nucleotide sequence ID" value="XM_017016106.2"/>
</dbReference>
<dbReference type="RefSeq" id="XP_047281073.1">
    <property type="nucleotide sequence ID" value="XM_047425117.1"/>
</dbReference>
<dbReference type="RefSeq" id="XP_054221631.1">
    <property type="nucleotide sequence ID" value="XM_054365656.1"/>
</dbReference>
<dbReference type="RefSeq" id="XP_054221632.1">
    <property type="nucleotide sequence ID" value="XM_054365657.1"/>
</dbReference>
<dbReference type="RefSeq" id="XP_054221633.1">
    <property type="nucleotide sequence ID" value="XM_054365658.1"/>
</dbReference>
<dbReference type="SMR" id="Q8IYA7"/>
<dbReference type="BioGRID" id="129453">
    <property type="interactions" value="18"/>
</dbReference>
<dbReference type="FunCoup" id="Q8IYA7">
    <property type="interactions" value="1041"/>
</dbReference>
<dbReference type="IntAct" id="Q8IYA7">
    <property type="interactions" value="4"/>
</dbReference>
<dbReference type="STRING" id="9606.ENSP00000364946"/>
<dbReference type="iPTMnet" id="Q8IYA7"/>
<dbReference type="PhosphoSitePlus" id="Q8IYA7"/>
<dbReference type="BioMuta" id="MKX"/>
<dbReference type="DMDM" id="296437371"/>
<dbReference type="MassIVE" id="Q8IYA7"/>
<dbReference type="PaxDb" id="9606-ENSP00000364946"/>
<dbReference type="PeptideAtlas" id="Q8IYA7"/>
<dbReference type="ProteomicsDB" id="71134"/>
<dbReference type="Antibodypedia" id="1800">
    <property type="antibodies" value="232 antibodies from 25 providers"/>
</dbReference>
<dbReference type="DNASU" id="283078"/>
<dbReference type="Ensembl" id="ENST00000375790.9">
    <property type="protein sequence ID" value="ENSP00000364946.4"/>
    <property type="gene ID" value="ENSG00000150051.14"/>
</dbReference>
<dbReference type="Ensembl" id="ENST00000419761.6">
    <property type="protein sequence ID" value="ENSP00000400896.1"/>
    <property type="gene ID" value="ENSG00000150051.14"/>
</dbReference>
<dbReference type="GeneID" id="283078"/>
<dbReference type="KEGG" id="hsa:283078"/>
<dbReference type="MANE-Select" id="ENST00000419761.6">
    <property type="protein sequence ID" value="ENSP00000400896.1"/>
    <property type="RefSeq nucleotide sequence ID" value="NM_173576.3"/>
    <property type="RefSeq protein sequence ID" value="NP_775847.2"/>
</dbReference>
<dbReference type="UCSC" id="uc001itx.5">
    <property type="organism name" value="human"/>
</dbReference>
<dbReference type="AGR" id="HGNC:23729"/>
<dbReference type="CTD" id="283078"/>
<dbReference type="DisGeNET" id="283078"/>
<dbReference type="GeneCards" id="MKX"/>
<dbReference type="HGNC" id="HGNC:23729">
    <property type="gene designation" value="MKX"/>
</dbReference>
<dbReference type="HPA" id="ENSG00000150051">
    <property type="expression patterns" value="Tissue enhanced (ovary, prostate)"/>
</dbReference>
<dbReference type="MalaCards" id="MKX"/>
<dbReference type="neXtProt" id="NX_Q8IYA7"/>
<dbReference type="OpenTargets" id="ENSG00000150051"/>
<dbReference type="PharmGKB" id="PA134964449"/>
<dbReference type="VEuPathDB" id="HostDB:ENSG00000150051"/>
<dbReference type="eggNOG" id="KOG0773">
    <property type="taxonomic scope" value="Eukaryota"/>
</dbReference>
<dbReference type="GeneTree" id="ENSGT00940000156227"/>
<dbReference type="HOGENOM" id="CLU_049743_0_0_1"/>
<dbReference type="InParanoid" id="Q8IYA7"/>
<dbReference type="OMA" id="TSTAMMG"/>
<dbReference type="OrthoDB" id="21495at2759"/>
<dbReference type="PAN-GO" id="Q8IYA7">
    <property type="GO annotations" value="6 GO annotations based on evolutionary models"/>
</dbReference>
<dbReference type="PhylomeDB" id="Q8IYA7"/>
<dbReference type="TreeFam" id="TF319371"/>
<dbReference type="PathwayCommons" id="Q8IYA7"/>
<dbReference type="SignaLink" id="Q8IYA7"/>
<dbReference type="SIGNOR" id="Q8IYA7"/>
<dbReference type="BioGRID-ORCS" id="283078">
    <property type="hits" value="10 hits in 1154 CRISPR screens"/>
</dbReference>
<dbReference type="ChiTaRS" id="MKX">
    <property type="organism name" value="human"/>
</dbReference>
<dbReference type="GeneWiki" id="MKX"/>
<dbReference type="GenomeRNAi" id="283078"/>
<dbReference type="Pharos" id="Q8IYA7">
    <property type="development level" value="Tbio"/>
</dbReference>
<dbReference type="PRO" id="PR:Q8IYA7"/>
<dbReference type="Proteomes" id="UP000005640">
    <property type="component" value="Chromosome 10"/>
</dbReference>
<dbReference type="RNAct" id="Q8IYA7">
    <property type="molecule type" value="protein"/>
</dbReference>
<dbReference type="Bgee" id="ENSG00000150051">
    <property type="expression patterns" value="Expressed in calcaneal tendon and 127 other cell types or tissues"/>
</dbReference>
<dbReference type="ExpressionAtlas" id="Q8IYA7">
    <property type="expression patterns" value="baseline and differential"/>
</dbReference>
<dbReference type="GO" id="GO:0000785">
    <property type="term" value="C:chromatin"/>
    <property type="evidence" value="ECO:0000247"/>
    <property type="project" value="NTNU_SB"/>
</dbReference>
<dbReference type="GO" id="GO:0005634">
    <property type="term" value="C:nucleus"/>
    <property type="evidence" value="ECO:0000318"/>
    <property type="project" value="GO_Central"/>
</dbReference>
<dbReference type="GO" id="GO:0000981">
    <property type="term" value="F:DNA-binding transcription factor activity, RNA polymerase II-specific"/>
    <property type="evidence" value="ECO:0000247"/>
    <property type="project" value="NTNU_SB"/>
</dbReference>
<dbReference type="GO" id="GO:0000978">
    <property type="term" value="F:RNA polymerase II cis-regulatory region sequence-specific DNA binding"/>
    <property type="evidence" value="ECO:0000318"/>
    <property type="project" value="GO_Central"/>
</dbReference>
<dbReference type="GO" id="GO:0048468">
    <property type="term" value="P:cell development"/>
    <property type="evidence" value="ECO:0000318"/>
    <property type="project" value="GO_Central"/>
</dbReference>
<dbReference type="GO" id="GO:0007517">
    <property type="term" value="P:muscle organ development"/>
    <property type="evidence" value="ECO:0000250"/>
    <property type="project" value="HGNC-UCL"/>
</dbReference>
<dbReference type="GO" id="GO:0006357">
    <property type="term" value="P:regulation of transcription by RNA polymerase II"/>
    <property type="evidence" value="ECO:0000318"/>
    <property type="project" value="GO_Central"/>
</dbReference>
<dbReference type="CDD" id="cd00086">
    <property type="entry name" value="homeodomain"/>
    <property type="match status" value="1"/>
</dbReference>
<dbReference type="FunFam" id="1.10.10.60:FF:000003">
    <property type="entry name" value="Iroquois-class homeobox protein IRX"/>
    <property type="match status" value="1"/>
</dbReference>
<dbReference type="Gene3D" id="1.10.10.60">
    <property type="entry name" value="Homeodomain-like"/>
    <property type="match status" value="1"/>
</dbReference>
<dbReference type="InterPro" id="IPR001356">
    <property type="entry name" value="HD"/>
</dbReference>
<dbReference type="InterPro" id="IPR017970">
    <property type="entry name" value="Homeobox_CS"/>
</dbReference>
<dbReference type="InterPro" id="IPR009057">
    <property type="entry name" value="Homeodomain-like_sf"/>
</dbReference>
<dbReference type="InterPro" id="IPR008422">
    <property type="entry name" value="KN_HD"/>
</dbReference>
<dbReference type="PANTHER" id="PTHR11211:SF3">
    <property type="entry name" value="HOMEOBOX PROTEIN MOHAWK"/>
    <property type="match status" value="1"/>
</dbReference>
<dbReference type="PANTHER" id="PTHR11211">
    <property type="entry name" value="IROQUOIS-CLASS HOMEODOMAIN PROTEIN IRX"/>
    <property type="match status" value="1"/>
</dbReference>
<dbReference type="Pfam" id="PF05920">
    <property type="entry name" value="Homeobox_KN"/>
    <property type="match status" value="1"/>
</dbReference>
<dbReference type="SMART" id="SM00389">
    <property type="entry name" value="HOX"/>
    <property type="match status" value="1"/>
</dbReference>
<dbReference type="SUPFAM" id="SSF46689">
    <property type="entry name" value="Homeodomain-like"/>
    <property type="match status" value="1"/>
</dbReference>
<dbReference type="PROSITE" id="PS00027">
    <property type="entry name" value="HOMEOBOX_1"/>
    <property type="match status" value="1"/>
</dbReference>
<dbReference type="PROSITE" id="PS50071">
    <property type="entry name" value="HOMEOBOX_2"/>
    <property type="match status" value="1"/>
</dbReference>
<comment type="function">
    <text evidence="1">May act as a morphogenetic regulator of cell adhesion.</text>
</comment>
<comment type="subcellular location">
    <subcellularLocation>
        <location evidence="4">Nucleus</location>
    </subcellularLocation>
</comment>
<comment type="similarity">
    <text evidence="4">Belongs to the TALE/IRO homeobox family.</text>
</comment>
<protein>
    <recommendedName>
        <fullName>Homeobox protein Mohawk</fullName>
    </recommendedName>
</protein>
<organism>
    <name type="scientific">Homo sapiens</name>
    <name type="common">Human</name>
    <dbReference type="NCBI Taxonomy" id="9606"/>
    <lineage>
        <taxon>Eukaryota</taxon>
        <taxon>Metazoa</taxon>
        <taxon>Chordata</taxon>
        <taxon>Craniata</taxon>
        <taxon>Vertebrata</taxon>
        <taxon>Euteleostomi</taxon>
        <taxon>Mammalia</taxon>
        <taxon>Eutheria</taxon>
        <taxon>Euarchontoglires</taxon>
        <taxon>Primates</taxon>
        <taxon>Haplorrhini</taxon>
        <taxon>Catarrhini</taxon>
        <taxon>Hominidae</taxon>
        <taxon>Homo</taxon>
    </lineage>
</organism>
<keyword id="KW-0217">Developmental protein</keyword>
<keyword id="KW-0238">DNA-binding</keyword>
<keyword id="KW-0371">Homeobox</keyword>
<keyword id="KW-0539">Nucleus</keyword>
<keyword id="KW-1267">Proteomics identification</keyword>
<keyword id="KW-1185">Reference proteome</keyword>
<name>MKX_HUMAN</name>
<proteinExistence type="evidence at protein level"/>
<evidence type="ECO:0000250" key="1"/>
<evidence type="ECO:0000255" key="2">
    <source>
        <dbReference type="PROSITE-ProRule" id="PRU00108"/>
    </source>
</evidence>
<evidence type="ECO:0000256" key="3">
    <source>
        <dbReference type="SAM" id="MobiDB-lite"/>
    </source>
</evidence>
<evidence type="ECO:0000305" key="4"/>
<accession>Q8IYA7</accession>
<accession>B3KWM5</accession>